<proteinExistence type="inferred from homology"/>
<feature type="chain" id="PRO_1000135146" description="ATP-dependent Clp protease proteolytic subunit">
    <location>
        <begin position="1"/>
        <end position="203"/>
    </location>
</feature>
<feature type="active site" description="Nucleophile" evidence="1">
    <location>
        <position position="100"/>
    </location>
</feature>
<feature type="active site" evidence="1">
    <location>
        <position position="125"/>
    </location>
</feature>
<evidence type="ECO:0000255" key="1">
    <source>
        <dbReference type="HAMAP-Rule" id="MF_00444"/>
    </source>
</evidence>
<organism>
    <name type="scientific">Anaeromyxobacter dehalogenans (strain 2CP-1 / ATCC BAA-258)</name>
    <dbReference type="NCBI Taxonomy" id="455488"/>
    <lineage>
        <taxon>Bacteria</taxon>
        <taxon>Pseudomonadati</taxon>
        <taxon>Myxococcota</taxon>
        <taxon>Myxococcia</taxon>
        <taxon>Myxococcales</taxon>
        <taxon>Cystobacterineae</taxon>
        <taxon>Anaeromyxobacteraceae</taxon>
        <taxon>Anaeromyxobacter</taxon>
    </lineage>
</organism>
<keyword id="KW-0963">Cytoplasm</keyword>
<keyword id="KW-0378">Hydrolase</keyword>
<keyword id="KW-0645">Protease</keyword>
<keyword id="KW-0720">Serine protease</keyword>
<gene>
    <name evidence="1" type="primary">clpP</name>
    <name type="ordered locus">A2cp1_3499</name>
</gene>
<protein>
    <recommendedName>
        <fullName evidence="1">ATP-dependent Clp protease proteolytic subunit</fullName>
        <ecNumber evidence="1">3.4.21.92</ecNumber>
    </recommendedName>
    <alternativeName>
        <fullName evidence="1">Endopeptidase Clp</fullName>
    </alternativeName>
</protein>
<comment type="function">
    <text evidence="1">Cleaves peptides in various proteins in a process that requires ATP hydrolysis. Has a chymotrypsin-like activity. Plays a major role in the degradation of misfolded proteins.</text>
</comment>
<comment type="catalytic activity">
    <reaction evidence="1">
        <text>Hydrolysis of proteins to small peptides in the presence of ATP and magnesium. alpha-casein is the usual test substrate. In the absence of ATP, only oligopeptides shorter than five residues are hydrolyzed (such as succinyl-Leu-Tyr-|-NHMec, and Leu-Tyr-Leu-|-Tyr-Trp, in which cleavage of the -Tyr-|-Leu- and -Tyr-|-Trp bonds also occurs).</text>
        <dbReference type="EC" id="3.4.21.92"/>
    </reaction>
</comment>
<comment type="subunit">
    <text evidence="1">Fourteen ClpP subunits assemble into 2 heptameric rings which stack back to back to give a disk-like structure with a central cavity, resembling the structure of eukaryotic proteasomes.</text>
</comment>
<comment type="subcellular location">
    <subcellularLocation>
        <location evidence="1">Cytoplasm</location>
    </subcellularLocation>
</comment>
<comment type="similarity">
    <text evidence="1">Belongs to the peptidase S14 family.</text>
</comment>
<dbReference type="EC" id="3.4.21.92" evidence="1"/>
<dbReference type="EMBL" id="CP001359">
    <property type="protein sequence ID" value="ACL66829.1"/>
    <property type="molecule type" value="Genomic_DNA"/>
</dbReference>
<dbReference type="RefSeq" id="WP_011422402.1">
    <property type="nucleotide sequence ID" value="NC_011891.1"/>
</dbReference>
<dbReference type="SMR" id="B8J5G7"/>
<dbReference type="MEROPS" id="S14.001"/>
<dbReference type="KEGG" id="acp:A2cp1_3499"/>
<dbReference type="HOGENOM" id="CLU_058707_3_2_7"/>
<dbReference type="Proteomes" id="UP000007089">
    <property type="component" value="Chromosome"/>
</dbReference>
<dbReference type="GO" id="GO:0005737">
    <property type="term" value="C:cytoplasm"/>
    <property type="evidence" value="ECO:0007669"/>
    <property type="project" value="UniProtKB-SubCell"/>
</dbReference>
<dbReference type="GO" id="GO:0009368">
    <property type="term" value="C:endopeptidase Clp complex"/>
    <property type="evidence" value="ECO:0007669"/>
    <property type="project" value="TreeGrafter"/>
</dbReference>
<dbReference type="GO" id="GO:0004176">
    <property type="term" value="F:ATP-dependent peptidase activity"/>
    <property type="evidence" value="ECO:0007669"/>
    <property type="project" value="InterPro"/>
</dbReference>
<dbReference type="GO" id="GO:0051117">
    <property type="term" value="F:ATPase binding"/>
    <property type="evidence" value="ECO:0007669"/>
    <property type="project" value="TreeGrafter"/>
</dbReference>
<dbReference type="GO" id="GO:0004252">
    <property type="term" value="F:serine-type endopeptidase activity"/>
    <property type="evidence" value="ECO:0007669"/>
    <property type="project" value="UniProtKB-UniRule"/>
</dbReference>
<dbReference type="GO" id="GO:0006515">
    <property type="term" value="P:protein quality control for misfolded or incompletely synthesized proteins"/>
    <property type="evidence" value="ECO:0007669"/>
    <property type="project" value="TreeGrafter"/>
</dbReference>
<dbReference type="CDD" id="cd07017">
    <property type="entry name" value="S14_ClpP_2"/>
    <property type="match status" value="1"/>
</dbReference>
<dbReference type="FunFam" id="3.90.226.10:FF:000001">
    <property type="entry name" value="ATP-dependent Clp protease proteolytic subunit"/>
    <property type="match status" value="1"/>
</dbReference>
<dbReference type="Gene3D" id="3.90.226.10">
    <property type="entry name" value="2-enoyl-CoA Hydratase, Chain A, domain 1"/>
    <property type="match status" value="1"/>
</dbReference>
<dbReference type="HAMAP" id="MF_00444">
    <property type="entry name" value="ClpP"/>
    <property type="match status" value="1"/>
</dbReference>
<dbReference type="InterPro" id="IPR001907">
    <property type="entry name" value="ClpP"/>
</dbReference>
<dbReference type="InterPro" id="IPR029045">
    <property type="entry name" value="ClpP/crotonase-like_dom_sf"/>
</dbReference>
<dbReference type="InterPro" id="IPR023562">
    <property type="entry name" value="ClpP/TepA"/>
</dbReference>
<dbReference type="InterPro" id="IPR018215">
    <property type="entry name" value="ClpP_Ser_AS"/>
</dbReference>
<dbReference type="NCBIfam" id="TIGR00493">
    <property type="entry name" value="clpP"/>
    <property type="match status" value="1"/>
</dbReference>
<dbReference type="NCBIfam" id="NF001368">
    <property type="entry name" value="PRK00277.1"/>
    <property type="match status" value="1"/>
</dbReference>
<dbReference type="NCBIfam" id="NF009205">
    <property type="entry name" value="PRK12553.1"/>
    <property type="match status" value="1"/>
</dbReference>
<dbReference type="PANTHER" id="PTHR10381">
    <property type="entry name" value="ATP-DEPENDENT CLP PROTEASE PROTEOLYTIC SUBUNIT"/>
    <property type="match status" value="1"/>
</dbReference>
<dbReference type="PANTHER" id="PTHR10381:SF70">
    <property type="entry name" value="ATP-DEPENDENT CLP PROTEASE PROTEOLYTIC SUBUNIT"/>
    <property type="match status" value="1"/>
</dbReference>
<dbReference type="Pfam" id="PF00574">
    <property type="entry name" value="CLP_protease"/>
    <property type="match status" value="1"/>
</dbReference>
<dbReference type="PRINTS" id="PR00127">
    <property type="entry name" value="CLPPROTEASEP"/>
</dbReference>
<dbReference type="SUPFAM" id="SSF52096">
    <property type="entry name" value="ClpP/crotonase"/>
    <property type="match status" value="1"/>
</dbReference>
<dbReference type="PROSITE" id="PS00381">
    <property type="entry name" value="CLP_PROTEASE_SER"/>
    <property type="match status" value="1"/>
</dbReference>
<accession>B8J5G7</accession>
<sequence>MPYIPMPYVVEQTHRGERSYDIYSRLLKDRIIFLGTPVDDDVANVIIAQLLFLESEDPDKDINLYINSPGGSVTSGLAIYDTMQYVKPQVSTICLGQAASMGAFLLAGGAAGKRFAVPNARIMIHQLSGGFQGQATDIEIQAKEALRLKAKLNEIMARHTRQPIERIERDTERDYFMSAGEAKEYGLIDDVFLHKKAADKKPQ</sequence>
<name>CLPP_ANAD2</name>
<reference key="1">
    <citation type="submission" date="2009-01" db="EMBL/GenBank/DDBJ databases">
        <title>Complete sequence of Anaeromyxobacter dehalogenans 2CP-1.</title>
        <authorList>
            <person name="Lucas S."/>
            <person name="Copeland A."/>
            <person name="Lapidus A."/>
            <person name="Glavina del Rio T."/>
            <person name="Dalin E."/>
            <person name="Tice H."/>
            <person name="Bruce D."/>
            <person name="Goodwin L."/>
            <person name="Pitluck S."/>
            <person name="Saunders E."/>
            <person name="Brettin T."/>
            <person name="Detter J.C."/>
            <person name="Han C."/>
            <person name="Larimer F."/>
            <person name="Land M."/>
            <person name="Hauser L."/>
            <person name="Kyrpides N."/>
            <person name="Ovchinnikova G."/>
            <person name="Beliaev A.S."/>
            <person name="Richardson P."/>
        </authorList>
    </citation>
    <scope>NUCLEOTIDE SEQUENCE [LARGE SCALE GENOMIC DNA]</scope>
    <source>
        <strain>2CP-1 / ATCC BAA-258</strain>
    </source>
</reference>